<evidence type="ECO:0000255" key="1">
    <source>
        <dbReference type="HAMAP-Rule" id="MF_00530"/>
    </source>
</evidence>
<evidence type="ECO:0000256" key="2">
    <source>
        <dbReference type="SAM" id="MobiDB-lite"/>
    </source>
</evidence>
<gene>
    <name evidence="1" type="primary">atpC</name>
    <name type="ordered locus">sync_2285</name>
</gene>
<keyword id="KW-0066">ATP synthesis</keyword>
<keyword id="KW-0139">CF(1)</keyword>
<keyword id="KW-0375">Hydrogen ion transport</keyword>
<keyword id="KW-0406">Ion transport</keyword>
<keyword id="KW-0472">Membrane</keyword>
<keyword id="KW-1185">Reference proteome</keyword>
<keyword id="KW-0793">Thylakoid</keyword>
<keyword id="KW-0813">Transport</keyword>
<sequence>MSLTLRVLAPDQSVFDGSADEVILPSTTGQVGILPGHVSLLAALDVGVLRVRTNSNWQSIALMGGFAEVESDDVTVLVNSAELGVNIDSTSAESDLSAARTAVTKLEGQPSTPEKVKAQQLFQRARARAQASKST</sequence>
<protein>
    <recommendedName>
        <fullName evidence="1">ATP synthase epsilon chain</fullName>
    </recommendedName>
    <alternativeName>
        <fullName evidence="1">ATP synthase F1 sector epsilon subunit</fullName>
    </alternativeName>
    <alternativeName>
        <fullName evidence="1">F-ATPase epsilon subunit</fullName>
    </alternativeName>
</protein>
<name>ATPE_SYNS3</name>
<comment type="function">
    <text evidence="1">Produces ATP from ADP in the presence of a proton gradient across the membrane.</text>
</comment>
<comment type="subunit">
    <text>F-type ATPases have 2 components, CF(1) - the catalytic core - and CF(0) - the membrane proton channel. CF(1) has five subunits: alpha(3), beta(3), gamma(1), delta(1), epsilon(1). CF(0) has three main subunits: a, b and c.</text>
</comment>
<comment type="subcellular location">
    <subcellularLocation>
        <location evidence="1">Cellular thylakoid membrane</location>
        <topology evidence="1">Peripheral membrane protein</topology>
    </subcellularLocation>
</comment>
<comment type="similarity">
    <text evidence="1">Belongs to the ATPase epsilon chain family.</text>
</comment>
<reference key="1">
    <citation type="journal article" date="2006" name="Proc. Natl. Acad. Sci. U.S.A.">
        <title>Genome sequence of Synechococcus CC9311: insights into adaptation to a coastal environment.</title>
        <authorList>
            <person name="Palenik B."/>
            <person name="Ren Q."/>
            <person name="Dupont C.L."/>
            <person name="Myers G.S."/>
            <person name="Heidelberg J.F."/>
            <person name="Badger J.H."/>
            <person name="Madupu R."/>
            <person name="Nelson W.C."/>
            <person name="Brinkac L.M."/>
            <person name="Dodson R.J."/>
            <person name="Durkin A.S."/>
            <person name="Daugherty S.C."/>
            <person name="Sullivan S.A."/>
            <person name="Khouri H."/>
            <person name="Mohamoud Y."/>
            <person name="Halpin R."/>
            <person name="Paulsen I.T."/>
        </authorList>
    </citation>
    <scope>NUCLEOTIDE SEQUENCE [LARGE SCALE GENOMIC DNA]</scope>
    <source>
        <strain>CC9311</strain>
    </source>
</reference>
<accession>Q0I7U0</accession>
<proteinExistence type="inferred from homology"/>
<feature type="chain" id="PRO_0000265909" description="ATP synthase epsilon chain">
    <location>
        <begin position="1"/>
        <end position="135"/>
    </location>
</feature>
<feature type="region of interest" description="Disordered" evidence="2">
    <location>
        <begin position="101"/>
        <end position="122"/>
    </location>
</feature>
<dbReference type="EMBL" id="CP000435">
    <property type="protein sequence ID" value="ABI45196.1"/>
    <property type="molecule type" value="Genomic_DNA"/>
</dbReference>
<dbReference type="RefSeq" id="WP_011620194.1">
    <property type="nucleotide sequence ID" value="NC_008319.1"/>
</dbReference>
<dbReference type="SMR" id="Q0I7U0"/>
<dbReference type="STRING" id="64471.sync_2285"/>
<dbReference type="KEGG" id="syg:sync_2285"/>
<dbReference type="eggNOG" id="COG0355">
    <property type="taxonomic scope" value="Bacteria"/>
</dbReference>
<dbReference type="HOGENOM" id="CLU_084338_1_2_3"/>
<dbReference type="OrthoDB" id="9804110at2"/>
<dbReference type="Proteomes" id="UP000001961">
    <property type="component" value="Chromosome"/>
</dbReference>
<dbReference type="GO" id="GO:0031676">
    <property type="term" value="C:plasma membrane-derived thylakoid membrane"/>
    <property type="evidence" value="ECO:0007669"/>
    <property type="project" value="UniProtKB-SubCell"/>
</dbReference>
<dbReference type="GO" id="GO:0045259">
    <property type="term" value="C:proton-transporting ATP synthase complex"/>
    <property type="evidence" value="ECO:0007669"/>
    <property type="project" value="UniProtKB-KW"/>
</dbReference>
<dbReference type="GO" id="GO:0005524">
    <property type="term" value="F:ATP binding"/>
    <property type="evidence" value="ECO:0007669"/>
    <property type="project" value="UniProtKB-UniRule"/>
</dbReference>
<dbReference type="GO" id="GO:0046933">
    <property type="term" value="F:proton-transporting ATP synthase activity, rotational mechanism"/>
    <property type="evidence" value="ECO:0007669"/>
    <property type="project" value="UniProtKB-UniRule"/>
</dbReference>
<dbReference type="CDD" id="cd12152">
    <property type="entry name" value="F1-ATPase_delta"/>
    <property type="match status" value="1"/>
</dbReference>
<dbReference type="Gene3D" id="2.60.15.10">
    <property type="entry name" value="F0F1 ATP synthase delta/epsilon subunit, N-terminal"/>
    <property type="match status" value="1"/>
</dbReference>
<dbReference type="Gene3D" id="1.10.287.540">
    <property type="entry name" value="Helix hairpin bin"/>
    <property type="match status" value="1"/>
</dbReference>
<dbReference type="HAMAP" id="MF_00530">
    <property type="entry name" value="ATP_synth_epsil_bac"/>
    <property type="match status" value="1"/>
</dbReference>
<dbReference type="InterPro" id="IPR001469">
    <property type="entry name" value="ATP_synth_F1_dsu/esu"/>
</dbReference>
<dbReference type="InterPro" id="IPR020546">
    <property type="entry name" value="ATP_synth_F1_dsu/esu_N"/>
</dbReference>
<dbReference type="InterPro" id="IPR036771">
    <property type="entry name" value="ATPsynth_dsu/esu_N"/>
</dbReference>
<dbReference type="NCBIfam" id="TIGR01216">
    <property type="entry name" value="ATP_synt_epsi"/>
    <property type="match status" value="1"/>
</dbReference>
<dbReference type="PANTHER" id="PTHR13822">
    <property type="entry name" value="ATP SYNTHASE DELTA/EPSILON CHAIN"/>
    <property type="match status" value="1"/>
</dbReference>
<dbReference type="PANTHER" id="PTHR13822:SF10">
    <property type="entry name" value="ATP SYNTHASE EPSILON CHAIN, CHLOROPLASTIC"/>
    <property type="match status" value="1"/>
</dbReference>
<dbReference type="Pfam" id="PF02823">
    <property type="entry name" value="ATP-synt_DE_N"/>
    <property type="match status" value="1"/>
</dbReference>
<dbReference type="SUPFAM" id="SSF51344">
    <property type="entry name" value="Epsilon subunit of F1F0-ATP synthase N-terminal domain"/>
    <property type="match status" value="1"/>
</dbReference>
<organism>
    <name type="scientific">Synechococcus sp. (strain CC9311)</name>
    <dbReference type="NCBI Taxonomy" id="64471"/>
    <lineage>
        <taxon>Bacteria</taxon>
        <taxon>Bacillati</taxon>
        <taxon>Cyanobacteriota</taxon>
        <taxon>Cyanophyceae</taxon>
        <taxon>Synechococcales</taxon>
        <taxon>Synechococcaceae</taxon>
        <taxon>Synechococcus</taxon>
    </lineage>
</organism>